<reference key="1">
    <citation type="journal article" date="2005" name="Science">
        <title>The transcriptional landscape of the mammalian genome.</title>
        <authorList>
            <person name="Carninci P."/>
            <person name="Kasukawa T."/>
            <person name="Katayama S."/>
            <person name="Gough J."/>
            <person name="Frith M.C."/>
            <person name="Maeda N."/>
            <person name="Oyama R."/>
            <person name="Ravasi T."/>
            <person name="Lenhard B."/>
            <person name="Wells C."/>
            <person name="Kodzius R."/>
            <person name="Shimokawa K."/>
            <person name="Bajic V.B."/>
            <person name="Brenner S.E."/>
            <person name="Batalov S."/>
            <person name="Forrest A.R."/>
            <person name="Zavolan M."/>
            <person name="Davis M.J."/>
            <person name="Wilming L.G."/>
            <person name="Aidinis V."/>
            <person name="Allen J.E."/>
            <person name="Ambesi-Impiombato A."/>
            <person name="Apweiler R."/>
            <person name="Aturaliya R.N."/>
            <person name="Bailey T.L."/>
            <person name="Bansal M."/>
            <person name="Baxter L."/>
            <person name="Beisel K.W."/>
            <person name="Bersano T."/>
            <person name="Bono H."/>
            <person name="Chalk A.M."/>
            <person name="Chiu K.P."/>
            <person name="Choudhary V."/>
            <person name="Christoffels A."/>
            <person name="Clutterbuck D.R."/>
            <person name="Crowe M.L."/>
            <person name="Dalla E."/>
            <person name="Dalrymple B.P."/>
            <person name="de Bono B."/>
            <person name="Della Gatta G."/>
            <person name="di Bernardo D."/>
            <person name="Down T."/>
            <person name="Engstrom P."/>
            <person name="Fagiolini M."/>
            <person name="Faulkner G."/>
            <person name="Fletcher C.F."/>
            <person name="Fukushima T."/>
            <person name="Furuno M."/>
            <person name="Futaki S."/>
            <person name="Gariboldi M."/>
            <person name="Georgii-Hemming P."/>
            <person name="Gingeras T.R."/>
            <person name="Gojobori T."/>
            <person name="Green R.E."/>
            <person name="Gustincich S."/>
            <person name="Harbers M."/>
            <person name="Hayashi Y."/>
            <person name="Hensch T.K."/>
            <person name="Hirokawa N."/>
            <person name="Hill D."/>
            <person name="Huminiecki L."/>
            <person name="Iacono M."/>
            <person name="Ikeo K."/>
            <person name="Iwama A."/>
            <person name="Ishikawa T."/>
            <person name="Jakt M."/>
            <person name="Kanapin A."/>
            <person name="Katoh M."/>
            <person name="Kawasawa Y."/>
            <person name="Kelso J."/>
            <person name="Kitamura H."/>
            <person name="Kitano H."/>
            <person name="Kollias G."/>
            <person name="Krishnan S.P."/>
            <person name="Kruger A."/>
            <person name="Kummerfeld S.K."/>
            <person name="Kurochkin I.V."/>
            <person name="Lareau L.F."/>
            <person name="Lazarevic D."/>
            <person name="Lipovich L."/>
            <person name="Liu J."/>
            <person name="Liuni S."/>
            <person name="McWilliam S."/>
            <person name="Madan Babu M."/>
            <person name="Madera M."/>
            <person name="Marchionni L."/>
            <person name="Matsuda H."/>
            <person name="Matsuzawa S."/>
            <person name="Miki H."/>
            <person name="Mignone F."/>
            <person name="Miyake S."/>
            <person name="Morris K."/>
            <person name="Mottagui-Tabar S."/>
            <person name="Mulder N."/>
            <person name="Nakano N."/>
            <person name="Nakauchi H."/>
            <person name="Ng P."/>
            <person name="Nilsson R."/>
            <person name="Nishiguchi S."/>
            <person name="Nishikawa S."/>
            <person name="Nori F."/>
            <person name="Ohara O."/>
            <person name="Okazaki Y."/>
            <person name="Orlando V."/>
            <person name="Pang K.C."/>
            <person name="Pavan W.J."/>
            <person name="Pavesi G."/>
            <person name="Pesole G."/>
            <person name="Petrovsky N."/>
            <person name="Piazza S."/>
            <person name="Reed J."/>
            <person name="Reid J.F."/>
            <person name="Ring B.Z."/>
            <person name="Ringwald M."/>
            <person name="Rost B."/>
            <person name="Ruan Y."/>
            <person name="Salzberg S.L."/>
            <person name="Sandelin A."/>
            <person name="Schneider C."/>
            <person name="Schoenbach C."/>
            <person name="Sekiguchi K."/>
            <person name="Semple C.A."/>
            <person name="Seno S."/>
            <person name="Sessa L."/>
            <person name="Sheng Y."/>
            <person name="Shibata Y."/>
            <person name="Shimada H."/>
            <person name="Shimada K."/>
            <person name="Silva D."/>
            <person name="Sinclair B."/>
            <person name="Sperling S."/>
            <person name="Stupka E."/>
            <person name="Sugiura K."/>
            <person name="Sultana R."/>
            <person name="Takenaka Y."/>
            <person name="Taki K."/>
            <person name="Tammoja K."/>
            <person name="Tan S.L."/>
            <person name="Tang S."/>
            <person name="Taylor M.S."/>
            <person name="Tegner J."/>
            <person name="Teichmann S.A."/>
            <person name="Ueda H.R."/>
            <person name="van Nimwegen E."/>
            <person name="Verardo R."/>
            <person name="Wei C.L."/>
            <person name="Yagi K."/>
            <person name="Yamanishi H."/>
            <person name="Zabarovsky E."/>
            <person name="Zhu S."/>
            <person name="Zimmer A."/>
            <person name="Hide W."/>
            <person name="Bult C."/>
            <person name="Grimmond S.M."/>
            <person name="Teasdale R.D."/>
            <person name="Liu E.T."/>
            <person name="Brusic V."/>
            <person name="Quackenbush J."/>
            <person name="Wahlestedt C."/>
            <person name="Mattick J.S."/>
            <person name="Hume D.A."/>
            <person name="Kai C."/>
            <person name="Sasaki D."/>
            <person name="Tomaru Y."/>
            <person name="Fukuda S."/>
            <person name="Kanamori-Katayama M."/>
            <person name="Suzuki M."/>
            <person name="Aoki J."/>
            <person name="Arakawa T."/>
            <person name="Iida J."/>
            <person name="Imamura K."/>
            <person name="Itoh M."/>
            <person name="Kato T."/>
            <person name="Kawaji H."/>
            <person name="Kawagashira N."/>
            <person name="Kawashima T."/>
            <person name="Kojima M."/>
            <person name="Kondo S."/>
            <person name="Konno H."/>
            <person name="Nakano K."/>
            <person name="Ninomiya N."/>
            <person name="Nishio T."/>
            <person name="Okada M."/>
            <person name="Plessy C."/>
            <person name="Shibata K."/>
            <person name="Shiraki T."/>
            <person name="Suzuki S."/>
            <person name="Tagami M."/>
            <person name="Waki K."/>
            <person name="Watahiki A."/>
            <person name="Okamura-Oho Y."/>
            <person name="Suzuki H."/>
            <person name="Kawai J."/>
            <person name="Hayashizaki Y."/>
        </authorList>
    </citation>
    <scope>NUCLEOTIDE SEQUENCE [LARGE SCALE MRNA]</scope>
    <source>
        <strain>C57BL/6J</strain>
        <tissue>Embryonic stem cell</tissue>
        <tissue>Heart</tissue>
    </source>
</reference>
<reference key="2">
    <citation type="journal article" date="2009" name="PLoS Biol.">
        <title>Lineage-specific biology revealed by a finished genome assembly of the mouse.</title>
        <authorList>
            <person name="Church D.M."/>
            <person name="Goodstadt L."/>
            <person name="Hillier L.W."/>
            <person name="Zody M.C."/>
            <person name="Goldstein S."/>
            <person name="She X."/>
            <person name="Bult C.J."/>
            <person name="Agarwala R."/>
            <person name="Cherry J.L."/>
            <person name="DiCuccio M."/>
            <person name="Hlavina W."/>
            <person name="Kapustin Y."/>
            <person name="Meric P."/>
            <person name="Maglott D."/>
            <person name="Birtle Z."/>
            <person name="Marques A.C."/>
            <person name="Graves T."/>
            <person name="Zhou S."/>
            <person name="Teague B."/>
            <person name="Potamousis K."/>
            <person name="Churas C."/>
            <person name="Place M."/>
            <person name="Herschleb J."/>
            <person name="Runnheim R."/>
            <person name="Forrest D."/>
            <person name="Amos-Landgraf J."/>
            <person name="Schwartz D.C."/>
            <person name="Cheng Z."/>
            <person name="Lindblad-Toh K."/>
            <person name="Eichler E.E."/>
            <person name="Ponting C.P."/>
        </authorList>
    </citation>
    <scope>NUCLEOTIDE SEQUENCE [LARGE SCALE GENOMIC DNA]</scope>
    <source>
        <strain>C57BL/6J</strain>
    </source>
</reference>
<reference key="3">
    <citation type="journal article" date="2004" name="Genome Res.">
        <title>The status, quality, and expansion of the NIH full-length cDNA project: the Mammalian Gene Collection (MGC).</title>
        <authorList>
            <consortium name="The MGC Project Team"/>
        </authorList>
    </citation>
    <scope>NUCLEOTIDE SEQUENCE [LARGE SCALE MRNA]</scope>
    <source>
        <strain>FVB/N</strain>
        <tissue>Kidney</tissue>
        <tissue>Liver</tissue>
    </source>
</reference>
<dbReference type="EMBL" id="AK003135">
    <property type="protein sequence ID" value="BAB22595.1"/>
    <property type="molecule type" value="mRNA"/>
</dbReference>
<dbReference type="EMBL" id="AK010457">
    <property type="protein sequence ID" value="BAB26954.1"/>
    <property type="molecule type" value="mRNA"/>
</dbReference>
<dbReference type="EMBL" id="AL590994">
    <property type="status" value="NOT_ANNOTATED_CDS"/>
    <property type="molecule type" value="Genomic_DNA"/>
</dbReference>
<dbReference type="EMBL" id="BC026811">
    <property type="protein sequence ID" value="AAH26811.1"/>
    <property type="molecule type" value="mRNA"/>
</dbReference>
<dbReference type="EMBL" id="BC055013">
    <property type="protein sequence ID" value="AAH55013.1"/>
    <property type="molecule type" value="mRNA"/>
</dbReference>
<dbReference type="CCDS" id="CCDS25477.1"/>
<dbReference type="RefSeq" id="NP_079930.1">
    <property type="nucleotide sequence ID" value="NM_025654.3"/>
</dbReference>
<dbReference type="BioGRID" id="211585">
    <property type="interactions" value="1"/>
</dbReference>
<dbReference type="FunCoup" id="Q9CQK3">
    <property type="interactions" value="635"/>
</dbReference>
<dbReference type="IntAct" id="Q9CQK3">
    <property type="interactions" value="1"/>
</dbReference>
<dbReference type="MINT" id="Q9CQK3"/>
<dbReference type="STRING" id="10090.ENSMUSP00000010506"/>
<dbReference type="PhosphoSitePlus" id="Q9CQK3"/>
<dbReference type="PaxDb" id="10090-ENSMUSP00000010506"/>
<dbReference type="ProteomicsDB" id="253193"/>
<dbReference type="Antibodypedia" id="73933">
    <property type="antibodies" value="118 antibodies from 22 providers"/>
</dbReference>
<dbReference type="Ensembl" id="ENSMUST00000010506.10">
    <property type="protein sequence ID" value="ENSMUSP00000010506.4"/>
    <property type="gene ID" value="ENSMUSG00000010362.10"/>
</dbReference>
<dbReference type="GeneID" id="66599"/>
<dbReference type="KEGG" id="mmu:66599"/>
<dbReference type="UCSC" id="uc007lpp.1">
    <property type="organism name" value="mouse"/>
</dbReference>
<dbReference type="AGR" id="MGI:1913849"/>
<dbReference type="CTD" id="201299"/>
<dbReference type="MGI" id="MGI:1913849">
    <property type="gene designation" value="Rdm1"/>
</dbReference>
<dbReference type="VEuPathDB" id="HostDB:ENSMUSG00000010362"/>
<dbReference type="eggNOG" id="ENOG502RXM9">
    <property type="taxonomic scope" value="Eukaryota"/>
</dbReference>
<dbReference type="GeneTree" id="ENSGT00390000018397"/>
<dbReference type="HOGENOM" id="CLU_085746_1_0_1"/>
<dbReference type="InParanoid" id="Q9CQK3"/>
<dbReference type="OMA" id="PAYECRS"/>
<dbReference type="OrthoDB" id="59209at9989"/>
<dbReference type="PhylomeDB" id="Q9CQK3"/>
<dbReference type="TreeFam" id="TF101222"/>
<dbReference type="BioGRID-ORCS" id="66599">
    <property type="hits" value="5 hits in 79 CRISPR screens"/>
</dbReference>
<dbReference type="PRO" id="PR:Q9CQK3"/>
<dbReference type="Proteomes" id="UP000000589">
    <property type="component" value="Chromosome 11"/>
</dbReference>
<dbReference type="RNAct" id="Q9CQK3">
    <property type="molecule type" value="protein"/>
</dbReference>
<dbReference type="Bgee" id="ENSMUSG00000010362">
    <property type="expression patterns" value="Expressed in interventricular septum and 171 other cell types or tissues"/>
</dbReference>
<dbReference type="ExpressionAtlas" id="Q9CQK3">
    <property type="expression patterns" value="baseline and differential"/>
</dbReference>
<dbReference type="GO" id="GO:0015030">
    <property type="term" value="C:Cajal body"/>
    <property type="evidence" value="ECO:0007669"/>
    <property type="project" value="UniProtKB-SubCell"/>
</dbReference>
<dbReference type="GO" id="GO:0005737">
    <property type="term" value="C:cytoplasm"/>
    <property type="evidence" value="ECO:0007669"/>
    <property type="project" value="UniProtKB-SubCell"/>
</dbReference>
<dbReference type="GO" id="GO:0005730">
    <property type="term" value="C:nucleolus"/>
    <property type="evidence" value="ECO:0007669"/>
    <property type="project" value="UniProtKB-SubCell"/>
</dbReference>
<dbReference type="GO" id="GO:0016605">
    <property type="term" value="C:PML body"/>
    <property type="evidence" value="ECO:0007669"/>
    <property type="project" value="UniProtKB-SubCell"/>
</dbReference>
<dbReference type="GO" id="GO:0003677">
    <property type="term" value="F:DNA binding"/>
    <property type="evidence" value="ECO:0007669"/>
    <property type="project" value="UniProtKB-KW"/>
</dbReference>
<dbReference type="GO" id="GO:0003723">
    <property type="term" value="F:RNA binding"/>
    <property type="evidence" value="ECO:0007669"/>
    <property type="project" value="UniProtKB-KW"/>
</dbReference>
<dbReference type="CDD" id="cd12364">
    <property type="entry name" value="RRM_RDM1"/>
    <property type="match status" value="1"/>
</dbReference>
<dbReference type="Gene3D" id="3.30.70.330">
    <property type="match status" value="1"/>
</dbReference>
<dbReference type="InterPro" id="IPR012677">
    <property type="entry name" value="Nucleotide-bd_a/b_plait_sf"/>
</dbReference>
<dbReference type="InterPro" id="IPR035979">
    <property type="entry name" value="RBD_domain_sf"/>
</dbReference>
<dbReference type="InterPro" id="IPR040224">
    <property type="entry name" value="RDM1"/>
</dbReference>
<dbReference type="InterPro" id="IPR034200">
    <property type="entry name" value="RDM1_RRM"/>
</dbReference>
<dbReference type="InterPro" id="IPR000504">
    <property type="entry name" value="RRM_dom"/>
</dbReference>
<dbReference type="PANTHER" id="PTHR31164">
    <property type="entry name" value="RAD52 MOTIF-CONTAINING PROTEIN 1"/>
    <property type="match status" value="1"/>
</dbReference>
<dbReference type="PANTHER" id="PTHR31164:SF1">
    <property type="entry name" value="RAD52 MOTIF-CONTAINING PROTEIN 1"/>
    <property type="match status" value="1"/>
</dbReference>
<dbReference type="Pfam" id="PF00076">
    <property type="entry name" value="RRM_1"/>
    <property type="match status" value="1"/>
</dbReference>
<dbReference type="SMART" id="SM00360">
    <property type="entry name" value="RRM"/>
    <property type="match status" value="1"/>
</dbReference>
<dbReference type="SUPFAM" id="SSF54768">
    <property type="entry name" value="dsRNA-binding domain-like"/>
    <property type="match status" value="1"/>
</dbReference>
<dbReference type="SUPFAM" id="SSF54928">
    <property type="entry name" value="RNA-binding domain, RBD"/>
    <property type="match status" value="1"/>
</dbReference>
<dbReference type="PROSITE" id="PS50102">
    <property type="entry name" value="RRM"/>
    <property type="match status" value="1"/>
</dbReference>
<sequence length="281" mass="31235">MAELISFVVPTQSDKVLLVWDLSTGPPAEALSHSLFTVFSQFGLLYSVRVFPNAAVARPGFYAIIKFYSSRDAQRAQKACDGKPLFQTSPVKVRLGTRHKALQHQAFALNSSRCQELANYYFGFSGWSKRIIKLQELSGLEDAALAVPMQKGSPQFLCAVEVVLPPYGCRSPGVGISEEPLRQLEEGQSSFLMKRKTAQKLAFQAAVSDAFQKLTIVVLESGRIAVEYRPTAEDLDARSEEELQNLIQVSCSSWSQSSQREEECLSDFSLEEEDLKLCDPH</sequence>
<keyword id="KW-0963">Cytoplasm</keyword>
<keyword id="KW-0238">DNA-binding</keyword>
<keyword id="KW-0539">Nucleus</keyword>
<keyword id="KW-1185">Reference proteome</keyword>
<keyword id="KW-0694">RNA-binding</keyword>
<feature type="chain" id="PRO_0000299530" description="RAD52 motif-containing protein 1">
    <location>
        <begin position="1"/>
        <end position="281"/>
    </location>
</feature>
<feature type="domain" description="RRM" evidence="2">
    <location>
        <begin position="15"/>
        <end position="98"/>
    </location>
</feature>
<feature type="region of interest" description="Necessary for nuclear localization and for nucleolar accumulation in response to heat shock" evidence="1">
    <location>
        <begin position="1"/>
        <end position="92"/>
    </location>
</feature>
<feature type="region of interest" description="Necessary for nuclear and nucleolar localization" evidence="1">
    <location>
        <begin position="90"/>
        <end position="133"/>
    </location>
</feature>
<comment type="function">
    <text evidence="1">May confer resistance to the antitumor agent cisplatin. Binds to DNA and RNA (By similarity).</text>
</comment>
<comment type="subunit">
    <text evidence="1">Homodimer.</text>
</comment>
<comment type="subcellular location">
    <subcellularLocation>
        <location>Nucleus</location>
    </subcellularLocation>
    <subcellularLocation>
        <location>Cytoplasm</location>
    </subcellularLocation>
    <subcellularLocation>
        <location>Nucleus</location>
        <location>Nucleolus</location>
    </subcellularLocation>
    <subcellularLocation>
        <location>Nucleus</location>
        <location>Cajal body</location>
    </subcellularLocation>
    <subcellularLocation>
        <location>Nucleus</location>
        <location>PML body</location>
    </subcellularLocation>
    <text evidence="1">After treatment with proteasomal inhibitors and mild heat-shock stress is relocalized to the nucleolus as dot-like or irregular subnuclear structures. Colocalized with nuclear promyelocytic leukemia (PML) and Cajal bodies (CB); this association with nuclear bodies is enhanced in response to proteotoxic stress. Relocalized in nucleolar caps during transcriptional arrest (By similarity).</text>
</comment>
<comment type="domain">
    <text evidence="1">C-terminal half contains cytoplasmic retention domains as well as determinants involved in its stress-induced nucleolar accumulation.</text>
</comment>
<proteinExistence type="evidence at transcript level"/>
<name>RDM1_MOUSE</name>
<evidence type="ECO:0000250" key="1"/>
<evidence type="ECO:0000255" key="2">
    <source>
        <dbReference type="PROSITE-ProRule" id="PRU00176"/>
    </source>
</evidence>
<accession>Q9CQK3</accession>
<organism>
    <name type="scientific">Mus musculus</name>
    <name type="common">Mouse</name>
    <dbReference type="NCBI Taxonomy" id="10090"/>
    <lineage>
        <taxon>Eukaryota</taxon>
        <taxon>Metazoa</taxon>
        <taxon>Chordata</taxon>
        <taxon>Craniata</taxon>
        <taxon>Vertebrata</taxon>
        <taxon>Euteleostomi</taxon>
        <taxon>Mammalia</taxon>
        <taxon>Eutheria</taxon>
        <taxon>Euarchontoglires</taxon>
        <taxon>Glires</taxon>
        <taxon>Rodentia</taxon>
        <taxon>Myomorpha</taxon>
        <taxon>Muroidea</taxon>
        <taxon>Muridae</taxon>
        <taxon>Murinae</taxon>
        <taxon>Mus</taxon>
        <taxon>Mus</taxon>
    </lineage>
</organism>
<protein>
    <recommendedName>
        <fullName>RAD52 motif-containing protein 1</fullName>
    </recommendedName>
</protein>
<gene>
    <name type="primary">Rdm1</name>
</gene>